<proteinExistence type="inferred from homology"/>
<feature type="chain" id="PRO_0000213097" description="D-alanyl carrier protein">
    <location>
        <begin position="1"/>
        <end position="78"/>
    </location>
</feature>
<feature type="domain" description="Carrier" evidence="1">
    <location>
        <begin position="1"/>
        <end position="78"/>
    </location>
</feature>
<feature type="modified residue" description="O-(pantetheine 4'-phosphoryl)serine" evidence="1">
    <location>
        <position position="36"/>
    </location>
</feature>
<accession>Q5HHF0</accession>
<name>DLTC_STAAC</name>
<sequence length="78" mass="9063">MEFREQVLNLLAEVAENDIVKENPDVEIFEEGIIDSFQTVGLLLEIQNKLDIEVSIMDFDRDEWATPNKIVEALEELR</sequence>
<comment type="function">
    <text evidence="1">Carrier protein involved in the D-alanylation of lipoteichoic acid (LTA). The loading of thioester-linked D-alanine onto DltC is catalyzed by D-alanine--D-alanyl carrier protein ligase DltA. The DltC-carried D-alanyl group is further transferred to cell membrane phosphatidylglycerol (PG) by forming an ester bond, probably catalyzed by DltD. D-alanylation of LTA plays an important role in modulating the properties of the cell wall in Gram-positive bacteria, influencing the net charge of the cell wall.</text>
</comment>
<comment type="pathway">
    <text evidence="1">Cell wall biogenesis; lipoteichoic acid biosynthesis.</text>
</comment>
<comment type="subcellular location">
    <subcellularLocation>
        <location evidence="1">Cytoplasm</location>
    </subcellularLocation>
</comment>
<comment type="PTM">
    <text evidence="1">4'-phosphopantetheine is transferred from CoA to a specific serine of apo-DCP.</text>
</comment>
<comment type="similarity">
    <text evidence="1">Belongs to the DltC family.</text>
</comment>
<evidence type="ECO:0000255" key="1">
    <source>
        <dbReference type="HAMAP-Rule" id="MF_00565"/>
    </source>
</evidence>
<reference key="1">
    <citation type="journal article" date="2005" name="J. Bacteriol.">
        <title>Insights on evolution of virulence and resistance from the complete genome analysis of an early methicillin-resistant Staphylococcus aureus strain and a biofilm-producing methicillin-resistant Staphylococcus epidermidis strain.</title>
        <authorList>
            <person name="Gill S.R."/>
            <person name="Fouts D.E."/>
            <person name="Archer G.L."/>
            <person name="Mongodin E.F."/>
            <person name="DeBoy R.T."/>
            <person name="Ravel J."/>
            <person name="Paulsen I.T."/>
            <person name="Kolonay J.F."/>
            <person name="Brinkac L.M."/>
            <person name="Beanan M.J."/>
            <person name="Dodson R.J."/>
            <person name="Daugherty S.C."/>
            <person name="Madupu R."/>
            <person name="Angiuoli S.V."/>
            <person name="Durkin A.S."/>
            <person name="Haft D.H."/>
            <person name="Vamathevan J.J."/>
            <person name="Khouri H."/>
            <person name="Utterback T.R."/>
            <person name="Lee C."/>
            <person name="Dimitrov G."/>
            <person name="Jiang L."/>
            <person name="Qin H."/>
            <person name="Weidman J."/>
            <person name="Tran K."/>
            <person name="Kang K.H."/>
            <person name="Hance I.R."/>
            <person name="Nelson K.E."/>
            <person name="Fraser C.M."/>
        </authorList>
    </citation>
    <scope>NUCLEOTIDE SEQUENCE [LARGE SCALE GENOMIC DNA]</scope>
    <source>
        <strain>COL</strain>
    </source>
</reference>
<protein>
    <recommendedName>
        <fullName evidence="1">D-alanyl carrier protein</fullName>
        <shortName evidence="1">DCP</shortName>
    </recommendedName>
    <alternativeName>
        <fullName evidence="1">D-alanine--poly(phosphoribitol) ligase subunit 2</fullName>
    </alternativeName>
</protein>
<organism>
    <name type="scientific">Staphylococcus aureus (strain COL)</name>
    <dbReference type="NCBI Taxonomy" id="93062"/>
    <lineage>
        <taxon>Bacteria</taxon>
        <taxon>Bacillati</taxon>
        <taxon>Bacillota</taxon>
        <taxon>Bacilli</taxon>
        <taxon>Bacillales</taxon>
        <taxon>Staphylococcaceae</taxon>
        <taxon>Staphylococcus</taxon>
    </lineage>
</organism>
<dbReference type="EMBL" id="CP000046">
    <property type="protein sequence ID" value="AAW37906.1"/>
    <property type="molecule type" value="Genomic_DNA"/>
</dbReference>
<dbReference type="RefSeq" id="WP_000395692.1">
    <property type="nucleotide sequence ID" value="NZ_JBGOFO010000002.1"/>
</dbReference>
<dbReference type="SMR" id="Q5HHF0"/>
<dbReference type="GeneID" id="98345253"/>
<dbReference type="KEGG" id="sac:SACOL0937"/>
<dbReference type="HOGENOM" id="CLU_108696_19_0_9"/>
<dbReference type="UniPathway" id="UPA00556"/>
<dbReference type="Proteomes" id="UP000000530">
    <property type="component" value="Chromosome"/>
</dbReference>
<dbReference type="GO" id="GO:0005737">
    <property type="term" value="C:cytoplasm"/>
    <property type="evidence" value="ECO:0007669"/>
    <property type="project" value="UniProtKB-SubCell"/>
</dbReference>
<dbReference type="GO" id="GO:0036370">
    <property type="term" value="F:D-alanyl carrier activity"/>
    <property type="evidence" value="ECO:0007669"/>
    <property type="project" value="UniProtKB-UniRule"/>
</dbReference>
<dbReference type="GO" id="GO:0071555">
    <property type="term" value="P:cell wall organization"/>
    <property type="evidence" value="ECO:0007669"/>
    <property type="project" value="UniProtKB-KW"/>
</dbReference>
<dbReference type="GO" id="GO:0070395">
    <property type="term" value="P:lipoteichoic acid biosynthetic process"/>
    <property type="evidence" value="ECO:0007669"/>
    <property type="project" value="UniProtKB-UniRule"/>
</dbReference>
<dbReference type="Gene3D" id="1.10.1200.10">
    <property type="entry name" value="ACP-like"/>
    <property type="match status" value="1"/>
</dbReference>
<dbReference type="HAMAP" id="MF_00565">
    <property type="entry name" value="DltC"/>
    <property type="match status" value="1"/>
</dbReference>
<dbReference type="InterPro" id="IPR036736">
    <property type="entry name" value="ACP-like_sf"/>
</dbReference>
<dbReference type="InterPro" id="IPR003230">
    <property type="entry name" value="DltC"/>
</dbReference>
<dbReference type="InterPro" id="IPR009081">
    <property type="entry name" value="PP-bd_ACP"/>
</dbReference>
<dbReference type="NCBIfam" id="TIGR01688">
    <property type="entry name" value="dltC"/>
    <property type="match status" value="1"/>
</dbReference>
<dbReference type="NCBIfam" id="NF003464">
    <property type="entry name" value="PRK05087.1"/>
    <property type="match status" value="1"/>
</dbReference>
<dbReference type="Pfam" id="PF00550">
    <property type="entry name" value="PP-binding"/>
    <property type="match status" value="1"/>
</dbReference>
<dbReference type="SUPFAM" id="SSF47336">
    <property type="entry name" value="ACP-like"/>
    <property type="match status" value="1"/>
</dbReference>
<dbReference type="PROSITE" id="PS50075">
    <property type="entry name" value="CARRIER"/>
    <property type="match status" value="1"/>
</dbReference>
<gene>
    <name evidence="1" type="primary">dltC</name>
    <name type="ordered locus">SACOL0937</name>
</gene>
<keyword id="KW-0961">Cell wall biogenesis/degradation</keyword>
<keyword id="KW-0963">Cytoplasm</keyword>
<keyword id="KW-0596">Phosphopantetheine</keyword>
<keyword id="KW-0597">Phosphoprotein</keyword>